<sequence length="346" mass="37206">MAGVSEAERRGHRKLVRFQARRAIGPIRPTSAAWDRDFDPAGKRIAVVGTDAAAAHYISRLSESAASVTVFTQAPRRVVTGVPLWTTRAKRWLRRRTGAEHPAVAWATAAIDALTSSGIRTSDGVEHPVDAIIYGTGFAIADQVGDQTLVGAGGVTIRQAWDDGMEPYLGVAVHGFPNYFFITGPDTAAQARCVVECMKLMERTASRRIEVRRSSQQVFNERAQLKPAQPHRQTGGLEAFDLSSAATEDDQTYDGAATLTLAGARFRVRVRLTGHLDPIDGNYHWQGTVFDSLPETSLTHARAATLTIGGRSAPARITEQTPWGTHSVAGVGPPPYARSGPASATT</sequence>
<proteinExistence type="predicted"/>
<dbReference type="EMBL" id="AL123456">
    <property type="protein sequence ID" value="CCP43691.1"/>
    <property type="molecule type" value="Genomic_DNA"/>
</dbReference>
<dbReference type="PIR" id="E70715">
    <property type="entry name" value="E70715"/>
</dbReference>
<dbReference type="RefSeq" id="NP_215458.1">
    <property type="nucleotide sequence ID" value="NC_000962.3"/>
</dbReference>
<dbReference type="RefSeq" id="WP_003898656.1">
    <property type="nucleotide sequence ID" value="NZ_NVQJ01000001.1"/>
</dbReference>
<dbReference type="SMR" id="P9WKN7"/>
<dbReference type="STRING" id="83332.Rv0943c"/>
<dbReference type="PaxDb" id="83332-Rv0943c"/>
<dbReference type="DNASU" id="885889"/>
<dbReference type="GeneID" id="885889"/>
<dbReference type="KEGG" id="mtu:Rv0943c"/>
<dbReference type="KEGG" id="mtv:RVBD_0943c"/>
<dbReference type="TubercuList" id="Rv0943c"/>
<dbReference type="eggNOG" id="COG2072">
    <property type="taxonomic scope" value="Bacteria"/>
</dbReference>
<dbReference type="InParanoid" id="P9WKN7"/>
<dbReference type="OrthoDB" id="3683556at2"/>
<dbReference type="PhylomeDB" id="P9WKN7"/>
<dbReference type="Proteomes" id="UP000001584">
    <property type="component" value="Chromosome"/>
</dbReference>
<dbReference type="GO" id="GO:0005886">
    <property type="term" value="C:plasma membrane"/>
    <property type="evidence" value="ECO:0007005"/>
    <property type="project" value="MTBBASE"/>
</dbReference>
<dbReference type="Gene3D" id="3.50.50.60">
    <property type="entry name" value="FAD/NAD(P)-binding domain"/>
    <property type="match status" value="1"/>
</dbReference>
<dbReference type="InterPro" id="IPR032371">
    <property type="entry name" value="DUF4873"/>
</dbReference>
<dbReference type="InterPro" id="IPR051209">
    <property type="entry name" value="FAD-bind_Monooxygenase_sf"/>
</dbReference>
<dbReference type="InterPro" id="IPR036188">
    <property type="entry name" value="FAD/NAD-bd_sf"/>
</dbReference>
<dbReference type="PANTHER" id="PTHR42877:SF4">
    <property type="entry name" value="FAD_NAD(P)-BINDING DOMAIN-CONTAINING PROTEIN-RELATED"/>
    <property type="match status" value="1"/>
</dbReference>
<dbReference type="PANTHER" id="PTHR42877">
    <property type="entry name" value="L-ORNITHINE N(5)-MONOOXYGENASE-RELATED"/>
    <property type="match status" value="1"/>
</dbReference>
<dbReference type="Pfam" id="PF16170">
    <property type="entry name" value="DUF4873"/>
    <property type="match status" value="1"/>
</dbReference>
<dbReference type="SUPFAM" id="SSF51905">
    <property type="entry name" value="FAD/NAD(P)-binding domain"/>
    <property type="match status" value="2"/>
</dbReference>
<evidence type="ECO:0000256" key="1">
    <source>
        <dbReference type="SAM" id="MobiDB-lite"/>
    </source>
</evidence>
<keyword id="KW-1185">Reference proteome</keyword>
<name>Y943_MYCTU</name>
<protein>
    <recommendedName>
        <fullName>Uncharacterized protein Rv0943c</fullName>
    </recommendedName>
</protein>
<feature type="chain" id="PRO_0000103747" description="Uncharacterized protein Rv0943c">
    <location>
        <begin position="1"/>
        <end position="346"/>
    </location>
</feature>
<feature type="region of interest" description="Disordered" evidence="1">
    <location>
        <begin position="321"/>
        <end position="346"/>
    </location>
</feature>
<reference key="1">
    <citation type="journal article" date="1998" name="Nature">
        <title>Deciphering the biology of Mycobacterium tuberculosis from the complete genome sequence.</title>
        <authorList>
            <person name="Cole S.T."/>
            <person name="Brosch R."/>
            <person name="Parkhill J."/>
            <person name="Garnier T."/>
            <person name="Churcher C.M."/>
            <person name="Harris D.E."/>
            <person name="Gordon S.V."/>
            <person name="Eiglmeier K."/>
            <person name="Gas S."/>
            <person name="Barry C.E. III"/>
            <person name="Tekaia F."/>
            <person name="Badcock K."/>
            <person name="Basham D."/>
            <person name="Brown D."/>
            <person name="Chillingworth T."/>
            <person name="Connor R."/>
            <person name="Davies R.M."/>
            <person name="Devlin K."/>
            <person name="Feltwell T."/>
            <person name="Gentles S."/>
            <person name="Hamlin N."/>
            <person name="Holroyd S."/>
            <person name="Hornsby T."/>
            <person name="Jagels K."/>
            <person name="Krogh A."/>
            <person name="McLean J."/>
            <person name="Moule S."/>
            <person name="Murphy L.D."/>
            <person name="Oliver S."/>
            <person name="Osborne J."/>
            <person name="Quail M.A."/>
            <person name="Rajandream M.A."/>
            <person name="Rogers J."/>
            <person name="Rutter S."/>
            <person name="Seeger K."/>
            <person name="Skelton S."/>
            <person name="Squares S."/>
            <person name="Squares R."/>
            <person name="Sulston J.E."/>
            <person name="Taylor K."/>
            <person name="Whitehead S."/>
            <person name="Barrell B.G."/>
        </authorList>
    </citation>
    <scope>NUCLEOTIDE SEQUENCE [LARGE SCALE GENOMIC DNA]</scope>
    <source>
        <strain>ATCC 25618 / H37Rv</strain>
    </source>
</reference>
<organism>
    <name type="scientific">Mycobacterium tuberculosis (strain ATCC 25618 / H37Rv)</name>
    <dbReference type="NCBI Taxonomy" id="83332"/>
    <lineage>
        <taxon>Bacteria</taxon>
        <taxon>Bacillati</taxon>
        <taxon>Actinomycetota</taxon>
        <taxon>Actinomycetes</taxon>
        <taxon>Mycobacteriales</taxon>
        <taxon>Mycobacteriaceae</taxon>
        <taxon>Mycobacterium</taxon>
        <taxon>Mycobacterium tuberculosis complex</taxon>
    </lineage>
</organism>
<gene>
    <name type="ordered locus">Rv0943c</name>
    <name type="ORF">MTCY10D7.31</name>
</gene>
<accession>P9WKN7</accession>
<accession>L0T5D1</accession>
<accession>P64765</accession>
<accession>P71566</accession>